<protein>
    <recommendedName>
        <fullName evidence="1">Anaerobic nitric oxide reductase transcription regulator NorR</fullName>
    </recommendedName>
</protein>
<reference key="1">
    <citation type="journal article" date="2009" name="PLoS Genet.">
        <title>Organised genome dynamics in the Escherichia coli species results in highly diverse adaptive paths.</title>
        <authorList>
            <person name="Touchon M."/>
            <person name="Hoede C."/>
            <person name="Tenaillon O."/>
            <person name="Barbe V."/>
            <person name="Baeriswyl S."/>
            <person name="Bidet P."/>
            <person name="Bingen E."/>
            <person name="Bonacorsi S."/>
            <person name="Bouchier C."/>
            <person name="Bouvet O."/>
            <person name="Calteau A."/>
            <person name="Chiapello H."/>
            <person name="Clermont O."/>
            <person name="Cruveiller S."/>
            <person name="Danchin A."/>
            <person name="Diard M."/>
            <person name="Dossat C."/>
            <person name="Karoui M.E."/>
            <person name="Frapy E."/>
            <person name="Garry L."/>
            <person name="Ghigo J.M."/>
            <person name="Gilles A.M."/>
            <person name="Johnson J."/>
            <person name="Le Bouguenec C."/>
            <person name="Lescat M."/>
            <person name="Mangenot S."/>
            <person name="Martinez-Jehanne V."/>
            <person name="Matic I."/>
            <person name="Nassif X."/>
            <person name="Oztas S."/>
            <person name="Petit M.A."/>
            <person name="Pichon C."/>
            <person name="Rouy Z."/>
            <person name="Ruf C.S."/>
            <person name="Schneider D."/>
            <person name="Tourret J."/>
            <person name="Vacherie B."/>
            <person name="Vallenet D."/>
            <person name="Medigue C."/>
            <person name="Rocha E.P.C."/>
            <person name="Denamur E."/>
        </authorList>
    </citation>
    <scope>NUCLEOTIDE SEQUENCE [LARGE SCALE GENOMIC DNA]</scope>
    <source>
        <strain>ATCC 35469 / DSM 13698 / BCRC 15582 / CCUG 18766 / IAM 14443 / JCM 21226 / LMG 7866 / NBRC 102419 / NCTC 12128 / CDC 0568-73</strain>
    </source>
</reference>
<organism>
    <name type="scientific">Escherichia fergusonii (strain ATCC 35469 / DSM 13698 / CCUG 18766 / IAM 14443 / JCM 21226 / LMG 7866 / NBRC 102419 / NCTC 12128 / CDC 0568-73)</name>
    <dbReference type="NCBI Taxonomy" id="585054"/>
    <lineage>
        <taxon>Bacteria</taxon>
        <taxon>Pseudomonadati</taxon>
        <taxon>Pseudomonadota</taxon>
        <taxon>Gammaproteobacteria</taxon>
        <taxon>Enterobacterales</taxon>
        <taxon>Enterobacteriaceae</taxon>
        <taxon>Escherichia</taxon>
    </lineage>
</organism>
<keyword id="KW-0067">ATP-binding</keyword>
<keyword id="KW-0238">DNA-binding</keyword>
<keyword id="KW-0547">Nucleotide-binding</keyword>
<keyword id="KW-0597">Phosphoprotein</keyword>
<keyword id="KW-0804">Transcription</keyword>
<keyword id="KW-0805">Transcription regulation</keyword>
<evidence type="ECO:0000255" key="1">
    <source>
        <dbReference type="HAMAP-Rule" id="MF_01314"/>
    </source>
</evidence>
<proteinExistence type="inferred from homology"/>
<dbReference type="EMBL" id="CU928158">
    <property type="protein sequence ID" value="CAQ87931.1"/>
    <property type="molecule type" value="Genomic_DNA"/>
</dbReference>
<dbReference type="RefSeq" id="WP_000010716.1">
    <property type="nucleotide sequence ID" value="NC_011740.1"/>
</dbReference>
<dbReference type="SMR" id="B7LW25"/>
<dbReference type="GeneID" id="75058561"/>
<dbReference type="KEGG" id="efe:EFER_0369"/>
<dbReference type="HOGENOM" id="CLU_000445_125_0_6"/>
<dbReference type="OrthoDB" id="9804019at2"/>
<dbReference type="UniPathway" id="UPA00638"/>
<dbReference type="Proteomes" id="UP000000745">
    <property type="component" value="Chromosome"/>
</dbReference>
<dbReference type="GO" id="GO:0005524">
    <property type="term" value="F:ATP binding"/>
    <property type="evidence" value="ECO:0007669"/>
    <property type="project" value="UniProtKB-UniRule"/>
</dbReference>
<dbReference type="GO" id="GO:0016887">
    <property type="term" value="F:ATP hydrolysis activity"/>
    <property type="evidence" value="ECO:0007669"/>
    <property type="project" value="InterPro"/>
</dbReference>
<dbReference type="GO" id="GO:0003677">
    <property type="term" value="F:DNA binding"/>
    <property type="evidence" value="ECO:0007669"/>
    <property type="project" value="UniProtKB-KW"/>
</dbReference>
<dbReference type="GO" id="GO:0003700">
    <property type="term" value="F:DNA-binding transcription factor activity"/>
    <property type="evidence" value="ECO:0007669"/>
    <property type="project" value="UniProtKB-UniRule"/>
</dbReference>
<dbReference type="GO" id="GO:0000160">
    <property type="term" value="P:phosphorelay signal transduction system"/>
    <property type="evidence" value="ECO:0007669"/>
    <property type="project" value="UniProtKB-UniRule"/>
</dbReference>
<dbReference type="CDD" id="cd00009">
    <property type="entry name" value="AAA"/>
    <property type="match status" value="1"/>
</dbReference>
<dbReference type="FunFam" id="1.10.10.60:FF:000188">
    <property type="entry name" value="Anaerobic nitric oxide reductase transcription regulator NorR"/>
    <property type="match status" value="1"/>
</dbReference>
<dbReference type="FunFam" id="1.10.8.60:FF:000045">
    <property type="entry name" value="Anaerobic nitric oxide reductase transcription regulator NorR"/>
    <property type="match status" value="1"/>
</dbReference>
<dbReference type="FunFam" id="3.30.450.40:FF:000021">
    <property type="entry name" value="Anaerobic nitric oxide reductase transcription regulator NorR"/>
    <property type="match status" value="1"/>
</dbReference>
<dbReference type="FunFam" id="3.40.50.300:FF:000006">
    <property type="entry name" value="DNA-binding transcriptional regulator NtrC"/>
    <property type="match status" value="1"/>
</dbReference>
<dbReference type="Gene3D" id="1.10.8.60">
    <property type="match status" value="1"/>
</dbReference>
<dbReference type="Gene3D" id="3.30.450.40">
    <property type="match status" value="1"/>
</dbReference>
<dbReference type="Gene3D" id="1.10.10.60">
    <property type="entry name" value="Homeodomain-like"/>
    <property type="match status" value="1"/>
</dbReference>
<dbReference type="Gene3D" id="3.40.50.300">
    <property type="entry name" value="P-loop containing nucleotide triphosphate hydrolases"/>
    <property type="match status" value="1"/>
</dbReference>
<dbReference type="HAMAP" id="MF_01314">
    <property type="entry name" value="NorR"/>
    <property type="match status" value="1"/>
</dbReference>
<dbReference type="InterPro" id="IPR003593">
    <property type="entry name" value="AAA+_ATPase"/>
</dbReference>
<dbReference type="InterPro" id="IPR003018">
    <property type="entry name" value="GAF"/>
</dbReference>
<dbReference type="InterPro" id="IPR029016">
    <property type="entry name" value="GAF-like_dom_sf"/>
</dbReference>
<dbReference type="InterPro" id="IPR009057">
    <property type="entry name" value="Homeodomain-like_sf"/>
</dbReference>
<dbReference type="InterPro" id="IPR023944">
    <property type="entry name" value="NorR"/>
</dbReference>
<dbReference type="InterPro" id="IPR027417">
    <property type="entry name" value="P-loop_NTPase"/>
</dbReference>
<dbReference type="InterPro" id="IPR002078">
    <property type="entry name" value="Sigma_54_int"/>
</dbReference>
<dbReference type="InterPro" id="IPR025662">
    <property type="entry name" value="Sigma_54_int_dom_ATP-bd_1"/>
</dbReference>
<dbReference type="InterPro" id="IPR025943">
    <property type="entry name" value="Sigma_54_int_dom_ATP-bd_2"/>
</dbReference>
<dbReference type="InterPro" id="IPR025944">
    <property type="entry name" value="Sigma_54_int_dom_CS"/>
</dbReference>
<dbReference type="NCBIfam" id="NF003451">
    <property type="entry name" value="PRK05022.1"/>
    <property type="match status" value="1"/>
</dbReference>
<dbReference type="PANTHER" id="PTHR32071:SF35">
    <property type="entry name" value="ANAEROBIC NITRIC OXIDE REDUCTASE TRANSCRIPTION REGULATOR NORR"/>
    <property type="match status" value="1"/>
</dbReference>
<dbReference type="PANTHER" id="PTHR32071">
    <property type="entry name" value="TRANSCRIPTIONAL REGULATORY PROTEIN"/>
    <property type="match status" value="1"/>
</dbReference>
<dbReference type="Pfam" id="PF01590">
    <property type="entry name" value="GAF"/>
    <property type="match status" value="1"/>
</dbReference>
<dbReference type="Pfam" id="PF00158">
    <property type="entry name" value="Sigma54_activat"/>
    <property type="match status" value="1"/>
</dbReference>
<dbReference type="SMART" id="SM00382">
    <property type="entry name" value="AAA"/>
    <property type="match status" value="1"/>
</dbReference>
<dbReference type="SMART" id="SM00065">
    <property type="entry name" value="GAF"/>
    <property type="match status" value="1"/>
</dbReference>
<dbReference type="SUPFAM" id="SSF55781">
    <property type="entry name" value="GAF domain-like"/>
    <property type="match status" value="1"/>
</dbReference>
<dbReference type="SUPFAM" id="SSF46689">
    <property type="entry name" value="Homeodomain-like"/>
    <property type="match status" value="1"/>
</dbReference>
<dbReference type="SUPFAM" id="SSF52540">
    <property type="entry name" value="P-loop containing nucleoside triphosphate hydrolases"/>
    <property type="match status" value="1"/>
</dbReference>
<dbReference type="PROSITE" id="PS00675">
    <property type="entry name" value="SIGMA54_INTERACT_1"/>
    <property type="match status" value="1"/>
</dbReference>
<dbReference type="PROSITE" id="PS00676">
    <property type="entry name" value="SIGMA54_INTERACT_2"/>
    <property type="match status" value="1"/>
</dbReference>
<dbReference type="PROSITE" id="PS00688">
    <property type="entry name" value="SIGMA54_INTERACT_3"/>
    <property type="match status" value="1"/>
</dbReference>
<dbReference type="PROSITE" id="PS50045">
    <property type="entry name" value="SIGMA54_INTERACT_4"/>
    <property type="match status" value="1"/>
</dbReference>
<name>NORR_ESCF3</name>
<feature type="chain" id="PRO_1000141194" description="Anaerobic nitric oxide reductase transcription regulator NorR">
    <location>
        <begin position="1"/>
        <end position="504"/>
    </location>
</feature>
<feature type="domain" description="Sigma-54 factor interaction" evidence="1">
    <location>
        <begin position="187"/>
        <end position="416"/>
    </location>
</feature>
<feature type="DNA-binding region" description="H-T-H motif" evidence="1">
    <location>
        <begin position="479"/>
        <end position="498"/>
    </location>
</feature>
<feature type="binding site" evidence="1">
    <location>
        <begin position="215"/>
        <end position="222"/>
    </location>
    <ligand>
        <name>ATP</name>
        <dbReference type="ChEBI" id="CHEBI:30616"/>
    </ligand>
</feature>
<feature type="binding site" evidence="1">
    <location>
        <begin position="278"/>
        <end position="287"/>
    </location>
    <ligand>
        <name>ATP</name>
        <dbReference type="ChEBI" id="CHEBI:30616"/>
    </ligand>
</feature>
<feature type="modified residue" description="4-aspartylphosphate" evidence="1">
    <location>
        <position position="57"/>
    </location>
</feature>
<comment type="function">
    <text evidence="1">Required for the expression of anaerobic nitric oxide (NO) reductase, acts as a transcriptional activator for at least the norVW operon. Activation also requires sigma-54.</text>
</comment>
<comment type="pathway">
    <text evidence="1">Nitrogen metabolism; nitric oxide reduction.</text>
</comment>
<gene>
    <name evidence="1" type="primary">norR</name>
    <name type="ordered locus">EFER_0369</name>
</gene>
<sequence>MSFSVDVLANIAIELQRGIGHQDRFQRLITTLRQVLECDASALLRYDSRQFIPLAIDGLAKDVLGRRFALEGHPRLEAIARAGDVVRFPADSELPDPYDGLIPGQESLKVHACVGLPLFAGQNLIGALTLDGMQPDQFDVFSDEELRLIAALAAGALSNALLIEQLESQNMLPGDAAPFEALKETQMIGLSPGMTQLKKEIEIVAASDLNVLISGETGTGKELVAKAIHEASPRAVNPLVYLNCAALPESVAESELFGHVKGAFTGAISNRSGKFEMADNGTLFLDEIGELSLTLQAKLLRVLQYGDIQRVGDDRSLRVDVRVLAATNRDLREEVLAGRFRADLFHRLSVFPLLVPPLRERGDDVILLAGYFCEQCRLRLGLSRVVLSAGARNLLQHYSFPGNVRELEHAIHRAVVLSRATRSGDEVILEAQHFAFPEVTLPPPEAAAVPIVKQNLREATEEFQRKTIRQALAQNHHNWAASARMLETDVANLHRLAKRLGLKD</sequence>
<accession>B7LW25</accession>